<gene>
    <name evidence="1" type="primary">hisF</name>
    <name type="ordered locus">gll4314</name>
</gene>
<dbReference type="EC" id="4.3.2.10" evidence="1"/>
<dbReference type="EMBL" id="BA000045">
    <property type="protein sequence ID" value="BAC92255.1"/>
    <property type="molecule type" value="Genomic_DNA"/>
</dbReference>
<dbReference type="RefSeq" id="NP_927260.1">
    <property type="nucleotide sequence ID" value="NC_005125.1"/>
</dbReference>
<dbReference type="RefSeq" id="WP_011144298.1">
    <property type="nucleotide sequence ID" value="NC_005125.1"/>
</dbReference>
<dbReference type="SMR" id="Q7NDC1"/>
<dbReference type="FunCoup" id="Q7NDC1">
    <property type="interactions" value="312"/>
</dbReference>
<dbReference type="STRING" id="251221.gene:10761833"/>
<dbReference type="EnsemblBacteria" id="BAC92255">
    <property type="protein sequence ID" value="BAC92255"/>
    <property type="gene ID" value="BAC92255"/>
</dbReference>
<dbReference type="KEGG" id="gvi:gll4314"/>
<dbReference type="PATRIC" id="fig|251221.4.peg.4343"/>
<dbReference type="eggNOG" id="COG0107">
    <property type="taxonomic scope" value="Bacteria"/>
</dbReference>
<dbReference type="HOGENOM" id="CLU_048577_4_0_3"/>
<dbReference type="InParanoid" id="Q7NDC1"/>
<dbReference type="OrthoDB" id="9781903at2"/>
<dbReference type="PhylomeDB" id="Q7NDC1"/>
<dbReference type="UniPathway" id="UPA00031">
    <property type="reaction ID" value="UER00010"/>
</dbReference>
<dbReference type="Proteomes" id="UP000000557">
    <property type="component" value="Chromosome"/>
</dbReference>
<dbReference type="GO" id="GO:0005737">
    <property type="term" value="C:cytoplasm"/>
    <property type="evidence" value="ECO:0007669"/>
    <property type="project" value="UniProtKB-SubCell"/>
</dbReference>
<dbReference type="GO" id="GO:0000107">
    <property type="term" value="F:imidazoleglycerol-phosphate synthase activity"/>
    <property type="evidence" value="ECO:0000318"/>
    <property type="project" value="GO_Central"/>
</dbReference>
<dbReference type="GO" id="GO:0016829">
    <property type="term" value="F:lyase activity"/>
    <property type="evidence" value="ECO:0007669"/>
    <property type="project" value="UniProtKB-KW"/>
</dbReference>
<dbReference type="GO" id="GO:0000105">
    <property type="term" value="P:L-histidine biosynthetic process"/>
    <property type="evidence" value="ECO:0007669"/>
    <property type="project" value="UniProtKB-UniRule"/>
</dbReference>
<dbReference type="CDD" id="cd04731">
    <property type="entry name" value="HisF"/>
    <property type="match status" value="1"/>
</dbReference>
<dbReference type="FunFam" id="3.20.20.70:FF:000006">
    <property type="entry name" value="Imidazole glycerol phosphate synthase subunit HisF"/>
    <property type="match status" value="1"/>
</dbReference>
<dbReference type="Gene3D" id="3.20.20.70">
    <property type="entry name" value="Aldolase class I"/>
    <property type="match status" value="1"/>
</dbReference>
<dbReference type="HAMAP" id="MF_01013">
    <property type="entry name" value="HisF"/>
    <property type="match status" value="1"/>
</dbReference>
<dbReference type="InterPro" id="IPR013785">
    <property type="entry name" value="Aldolase_TIM"/>
</dbReference>
<dbReference type="InterPro" id="IPR006062">
    <property type="entry name" value="His_biosynth"/>
</dbReference>
<dbReference type="InterPro" id="IPR004651">
    <property type="entry name" value="HisF"/>
</dbReference>
<dbReference type="InterPro" id="IPR050064">
    <property type="entry name" value="IGPS_HisA/HisF"/>
</dbReference>
<dbReference type="InterPro" id="IPR011060">
    <property type="entry name" value="RibuloseP-bd_barrel"/>
</dbReference>
<dbReference type="NCBIfam" id="TIGR00735">
    <property type="entry name" value="hisF"/>
    <property type="match status" value="1"/>
</dbReference>
<dbReference type="PANTHER" id="PTHR21235:SF2">
    <property type="entry name" value="IMIDAZOLE GLYCEROL PHOSPHATE SYNTHASE HISHF"/>
    <property type="match status" value="1"/>
</dbReference>
<dbReference type="PANTHER" id="PTHR21235">
    <property type="entry name" value="IMIDAZOLE GLYCEROL PHOSPHATE SYNTHASE SUBUNIT HISF/H IGP SYNTHASE SUBUNIT HISF/H"/>
    <property type="match status" value="1"/>
</dbReference>
<dbReference type="Pfam" id="PF00977">
    <property type="entry name" value="His_biosynth"/>
    <property type="match status" value="1"/>
</dbReference>
<dbReference type="SUPFAM" id="SSF51366">
    <property type="entry name" value="Ribulose-phoshate binding barrel"/>
    <property type="match status" value="1"/>
</dbReference>
<organism>
    <name type="scientific">Gloeobacter violaceus (strain ATCC 29082 / PCC 7421)</name>
    <dbReference type="NCBI Taxonomy" id="251221"/>
    <lineage>
        <taxon>Bacteria</taxon>
        <taxon>Bacillati</taxon>
        <taxon>Cyanobacteriota</taxon>
        <taxon>Cyanophyceae</taxon>
        <taxon>Gloeobacterales</taxon>
        <taxon>Gloeobacteraceae</taxon>
        <taxon>Gloeobacter</taxon>
    </lineage>
</organism>
<reference key="1">
    <citation type="journal article" date="2003" name="DNA Res.">
        <title>Complete genome structure of Gloeobacter violaceus PCC 7421, a cyanobacterium that lacks thylakoids.</title>
        <authorList>
            <person name="Nakamura Y."/>
            <person name="Kaneko T."/>
            <person name="Sato S."/>
            <person name="Mimuro M."/>
            <person name="Miyashita H."/>
            <person name="Tsuchiya T."/>
            <person name="Sasamoto S."/>
            <person name="Watanabe A."/>
            <person name="Kawashima K."/>
            <person name="Kishida Y."/>
            <person name="Kiyokawa C."/>
            <person name="Kohara M."/>
            <person name="Matsumoto M."/>
            <person name="Matsuno A."/>
            <person name="Nakazaki N."/>
            <person name="Shimpo S."/>
            <person name="Takeuchi C."/>
            <person name="Yamada M."/>
            <person name="Tabata S."/>
        </authorList>
    </citation>
    <scope>NUCLEOTIDE SEQUENCE [LARGE SCALE GENOMIC DNA]</scope>
    <source>
        <strain>ATCC 29082 / PCC 7421</strain>
    </source>
</reference>
<name>HIS6_GLOVI</name>
<comment type="function">
    <text evidence="1">IGPS catalyzes the conversion of PRFAR and glutamine to IGP, AICAR and glutamate. The HisF subunit catalyzes the cyclization activity that produces IGP and AICAR from PRFAR using the ammonia provided by the HisH subunit.</text>
</comment>
<comment type="catalytic activity">
    <reaction evidence="1">
        <text>5-[(5-phospho-1-deoxy-D-ribulos-1-ylimino)methylamino]-1-(5-phospho-beta-D-ribosyl)imidazole-4-carboxamide + L-glutamine = D-erythro-1-(imidazol-4-yl)glycerol 3-phosphate + 5-amino-1-(5-phospho-beta-D-ribosyl)imidazole-4-carboxamide + L-glutamate + H(+)</text>
        <dbReference type="Rhea" id="RHEA:24793"/>
        <dbReference type="ChEBI" id="CHEBI:15378"/>
        <dbReference type="ChEBI" id="CHEBI:29985"/>
        <dbReference type="ChEBI" id="CHEBI:58278"/>
        <dbReference type="ChEBI" id="CHEBI:58359"/>
        <dbReference type="ChEBI" id="CHEBI:58475"/>
        <dbReference type="ChEBI" id="CHEBI:58525"/>
        <dbReference type="EC" id="4.3.2.10"/>
    </reaction>
</comment>
<comment type="pathway">
    <text evidence="1">Amino-acid biosynthesis; L-histidine biosynthesis; L-histidine from 5-phospho-alpha-D-ribose 1-diphosphate: step 5/9.</text>
</comment>
<comment type="subunit">
    <text evidence="1">Heterodimer of HisH and HisF.</text>
</comment>
<comment type="subcellular location">
    <subcellularLocation>
        <location evidence="1">Cytoplasm</location>
    </subcellularLocation>
</comment>
<comment type="similarity">
    <text evidence="1">Belongs to the HisA/HisF family.</text>
</comment>
<accession>Q7NDC1</accession>
<keyword id="KW-0028">Amino-acid biosynthesis</keyword>
<keyword id="KW-0963">Cytoplasm</keyword>
<keyword id="KW-0368">Histidine biosynthesis</keyword>
<keyword id="KW-0456">Lyase</keyword>
<keyword id="KW-1185">Reference proteome</keyword>
<evidence type="ECO:0000255" key="1">
    <source>
        <dbReference type="HAMAP-Rule" id="MF_01013"/>
    </source>
</evidence>
<protein>
    <recommendedName>
        <fullName evidence="1">Imidazole glycerol phosphate synthase subunit HisF</fullName>
        <ecNumber evidence="1">4.3.2.10</ecNumber>
    </recommendedName>
    <alternativeName>
        <fullName evidence="1">IGP synthase cyclase subunit</fullName>
    </alternativeName>
    <alternativeName>
        <fullName evidence="1">IGP synthase subunit HisF</fullName>
    </alternativeName>
    <alternativeName>
        <fullName evidence="1">ImGP synthase subunit HisF</fullName>
        <shortName evidence="1">IGPS subunit HisF</shortName>
    </alternativeName>
</protein>
<sequence>MLAKRIVPCLDVKAGRVVKGVNFVGLRDAGDPVELAKLYNDQGADELVFLDIAATHEERAILIDVVYRTAEQVFIPLTVGGGIGDLDTIQALLDAGADKVSINSAAVRDPELIARAGERFGAQCIVLAIDARARAGGAGWEVYVRGGRTPTGLDAVAWAVEGERRGAGEILLTSMDADGTRAGYDLALTRAVAEAVQLPVIASGGAGNCEHIRTALTEGAAQAALLASLLHYGELTVEQIKAHLAAHGVPVRRG</sequence>
<feature type="chain" id="PRO_0000142161" description="Imidazole glycerol phosphate synthase subunit HisF">
    <location>
        <begin position="1"/>
        <end position="254"/>
    </location>
</feature>
<feature type="active site" evidence="1">
    <location>
        <position position="11"/>
    </location>
</feature>
<feature type="active site" evidence="1">
    <location>
        <position position="130"/>
    </location>
</feature>
<proteinExistence type="inferred from homology"/>